<organism>
    <name type="scientific">Saccharomyces cerevisiae (strain ATCC 204508 / S288c)</name>
    <name type="common">Baker's yeast</name>
    <dbReference type="NCBI Taxonomy" id="559292"/>
    <lineage>
        <taxon>Eukaryota</taxon>
        <taxon>Fungi</taxon>
        <taxon>Dikarya</taxon>
        <taxon>Ascomycota</taxon>
        <taxon>Saccharomycotina</taxon>
        <taxon>Saccharomycetes</taxon>
        <taxon>Saccharomycetales</taxon>
        <taxon>Saccharomycetaceae</taxon>
        <taxon>Saccharomyces</taxon>
    </lineage>
</organism>
<gene>
    <name type="ordered locus">YKL044W</name>
    <name type="ORF">YKL257</name>
</gene>
<dbReference type="EMBL" id="X71621">
    <property type="protein sequence ID" value="CAA50628.1"/>
    <property type="molecule type" value="Genomic_DNA"/>
</dbReference>
<dbReference type="EMBL" id="Z28044">
    <property type="protein sequence ID" value="CAA81879.1"/>
    <property type="molecule type" value="Genomic_DNA"/>
</dbReference>
<dbReference type="EMBL" id="BK006944">
    <property type="protein sequence ID" value="DAA35123.1"/>
    <property type="molecule type" value="Genomic_DNA"/>
</dbReference>
<dbReference type="PIR" id="S37865">
    <property type="entry name" value="S37865"/>
</dbReference>
<dbReference type="SMR" id="P36092"/>
<dbReference type="BioGRID" id="300694">
    <property type="interactions" value="72"/>
</dbReference>
<dbReference type="DIP" id="DIP-4755N"/>
<dbReference type="FunCoup" id="P36092">
    <property type="interactions" value="1"/>
</dbReference>
<dbReference type="STRING" id="4932.YKL044W"/>
<dbReference type="PaxDb" id="4932-YKL044W"/>
<dbReference type="EnsemblFungi" id="YKL044W_mRNA">
    <property type="protein sequence ID" value="YKL044W"/>
    <property type="gene ID" value="YKL044W"/>
</dbReference>
<dbReference type="KEGG" id="sce:YKL044W"/>
<dbReference type="AGR" id="SGD:S000001527"/>
<dbReference type="SGD" id="S000001527">
    <property type="gene designation" value="YKL044W"/>
</dbReference>
<dbReference type="VEuPathDB" id="FungiDB:YKL044W"/>
<dbReference type="HOGENOM" id="CLU_2224714_0_0_1"/>
<dbReference type="InParanoid" id="P36092"/>
<dbReference type="OrthoDB" id="4067992at2759"/>
<dbReference type="BioCyc" id="YEAST:G3O-31845-MONOMER"/>
<dbReference type="BioGRID-ORCS" id="853822">
    <property type="hits" value="0 hits in 10 CRISPR screens"/>
</dbReference>
<dbReference type="PRO" id="PR:P36092"/>
<dbReference type="Proteomes" id="UP000002311">
    <property type="component" value="Chromosome XI"/>
</dbReference>
<dbReference type="RNAct" id="P36092">
    <property type="molecule type" value="protein"/>
</dbReference>
<dbReference type="GO" id="GO:0016020">
    <property type="term" value="C:membrane"/>
    <property type="evidence" value="ECO:0007669"/>
    <property type="project" value="UniProtKB-SubCell"/>
</dbReference>
<dbReference type="GO" id="GO:0005739">
    <property type="term" value="C:mitochondrion"/>
    <property type="evidence" value="ECO:0007005"/>
    <property type="project" value="SGD"/>
</dbReference>
<keyword id="KW-0472">Membrane</keyword>
<keyword id="KW-1185">Reference proteome</keyword>
<keyword id="KW-0812">Transmembrane</keyword>
<keyword id="KW-1133">Transmembrane helix</keyword>
<reference key="1">
    <citation type="journal article" date="1993" name="Yeast">
        <title>The sequence of a 17.5 kb DNA fragment on the left arm of yeast chromosome XI identifies the protein kinase gene ELM1, the DNA primase gene PRI2, a new gene encoding a putative histone and seven new open reading frames.</title>
        <authorList>
            <person name="Purnelle B."/>
            <person name="Tettelin H."/>
            <person name="van Dyck L."/>
            <person name="Skala J."/>
            <person name="Goffeau A."/>
        </authorList>
    </citation>
    <scope>NUCLEOTIDE SEQUENCE [GENOMIC DNA]</scope>
    <source>
        <strain>ATCC 204508 / S288c</strain>
    </source>
</reference>
<reference key="2">
    <citation type="journal article" date="1994" name="Nature">
        <title>Complete DNA sequence of yeast chromosome XI.</title>
        <authorList>
            <person name="Dujon B."/>
            <person name="Alexandraki D."/>
            <person name="Andre B."/>
            <person name="Ansorge W."/>
            <person name="Baladron V."/>
            <person name="Ballesta J.P.G."/>
            <person name="Banrevi A."/>
            <person name="Bolle P.-A."/>
            <person name="Bolotin-Fukuhara M."/>
            <person name="Bossier P."/>
            <person name="Bou G."/>
            <person name="Boyer J."/>
            <person name="Buitrago M.J."/>
            <person name="Cheret G."/>
            <person name="Colleaux L."/>
            <person name="Daignan-Fornier B."/>
            <person name="del Rey F."/>
            <person name="Dion C."/>
            <person name="Domdey H."/>
            <person name="Duesterhoeft A."/>
            <person name="Duesterhus S."/>
            <person name="Entian K.-D."/>
            <person name="Erfle H."/>
            <person name="Esteban P.F."/>
            <person name="Feldmann H."/>
            <person name="Fernandes L."/>
            <person name="Fobo G.M."/>
            <person name="Fritz C."/>
            <person name="Fukuhara H."/>
            <person name="Gabel C."/>
            <person name="Gaillon L."/>
            <person name="Garcia-Cantalejo J.M."/>
            <person name="Garcia-Ramirez J.J."/>
            <person name="Gent M.E."/>
            <person name="Ghazvini M."/>
            <person name="Goffeau A."/>
            <person name="Gonzalez A."/>
            <person name="Grothues D."/>
            <person name="Guerreiro P."/>
            <person name="Hegemann J.H."/>
            <person name="Hewitt N."/>
            <person name="Hilger F."/>
            <person name="Hollenberg C.P."/>
            <person name="Horaitis O."/>
            <person name="Indge K.J."/>
            <person name="Jacquier A."/>
            <person name="James C.M."/>
            <person name="Jauniaux J.-C."/>
            <person name="Jimenez A."/>
            <person name="Keuchel H."/>
            <person name="Kirchrath L."/>
            <person name="Kleine K."/>
            <person name="Koetter P."/>
            <person name="Legrain P."/>
            <person name="Liebl S."/>
            <person name="Louis E.J."/>
            <person name="Maia e Silva A."/>
            <person name="Marck C."/>
            <person name="Monnier A.-L."/>
            <person name="Moestl D."/>
            <person name="Mueller S."/>
            <person name="Obermaier B."/>
            <person name="Oliver S.G."/>
            <person name="Pallier C."/>
            <person name="Pascolo S."/>
            <person name="Pfeiffer F."/>
            <person name="Philippsen P."/>
            <person name="Planta R.J."/>
            <person name="Pohl F.M."/>
            <person name="Pohl T.M."/>
            <person name="Poehlmann R."/>
            <person name="Portetelle D."/>
            <person name="Purnelle B."/>
            <person name="Puzos V."/>
            <person name="Ramezani Rad M."/>
            <person name="Rasmussen S.W."/>
            <person name="Remacha M.A."/>
            <person name="Revuelta J.L."/>
            <person name="Richard G.-F."/>
            <person name="Rieger M."/>
            <person name="Rodrigues-Pousada C."/>
            <person name="Rose M."/>
            <person name="Rupp T."/>
            <person name="Santos M.A."/>
            <person name="Schwager C."/>
            <person name="Sensen C."/>
            <person name="Skala J."/>
            <person name="Soares H."/>
            <person name="Sor F."/>
            <person name="Stegemann J."/>
            <person name="Tettelin H."/>
            <person name="Thierry A."/>
            <person name="Tzermia M."/>
            <person name="Urrestarazu L.A."/>
            <person name="van Dyck L."/>
            <person name="van Vliet-Reedijk J.C."/>
            <person name="Valens M."/>
            <person name="Vandenbol M."/>
            <person name="Vilela C."/>
            <person name="Vissers S."/>
            <person name="von Wettstein D."/>
            <person name="Voss H."/>
            <person name="Wiemann S."/>
            <person name="Xu G."/>
            <person name="Zimmermann J."/>
            <person name="Haasemann M."/>
            <person name="Becker I."/>
            <person name="Mewes H.-W."/>
        </authorList>
    </citation>
    <scope>NUCLEOTIDE SEQUENCE [LARGE SCALE GENOMIC DNA]</scope>
    <source>
        <strain>ATCC 204508 / S288c</strain>
    </source>
</reference>
<reference key="3">
    <citation type="journal article" date="2014" name="G3 (Bethesda)">
        <title>The reference genome sequence of Saccharomyces cerevisiae: Then and now.</title>
        <authorList>
            <person name="Engel S.R."/>
            <person name="Dietrich F.S."/>
            <person name="Fisk D.G."/>
            <person name="Binkley G."/>
            <person name="Balakrishnan R."/>
            <person name="Costanzo M.C."/>
            <person name="Dwight S.S."/>
            <person name="Hitz B.C."/>
            <person name="Karra K."/>
            <person name="Nash R.S."/>
            <person name="Weng S."/>
            <person name="Wong E.D."/>
            <person name="Lloyd P."/>
            <person name="Skrzypek M.S."/>
            <person name="Miyasato S.R."/>
            <person name="Simison M."/>
            <person name="Cherry J.M."/>
        </authorList>
    </citation>
    <scope>GENOME REANNOTATION</scope>
    <source>
        <strain>ATCC 204508 / S288c</strain>
    </source>
</reference>
<reference key="4">
    <citation type="journal article" date="2012" name="Science">
        <title>High-resolution view of the yeast meiotic program revealed by ribosome profiling.</title>
        <authorList>
            <person name="Brar G.A."/>
            <person name="Yassour M."/>
            <person name="Friedman N."/>
            <person name="Regev A."/>
            <person name="Ingolia N.T."/>
            <person name="Weissman J.S."/>
        </authorList>
    </citation>
    <scope>IDENTIFICATION</scope>
</reference>
<sequence length="106" mass="12448">MGYVIMTFSSARMSERRARIIYIWMHLSAYKINFPFVQFPTFFSLFRLQKKAAILIKNPSPFFLFFLFPYRKNSTARTIHQINQAVALVLLCVSHHLTYLPSVPSL</sequence>
<accession>P36092</accession>
<accession>I2HB68</accession>
<name>YKE44_YEAST</name>
<comment type="subcellular location">
    <subcellularLocation>
        <location evidence="2">Membrane</location>
        <topology evidence="2">Single-pass membrane protein</topology>
    </subcellularLocation>
</comment>
<evidence type="ECO:0000255" key="1"/>
<evidence type="ECO:0000305" key="2"/>
<protein>
    <recommendedName>
        <fullName>Uncharacterized protein YKL044W</fullName>
    </recommendedName>
</protein>
<proteinExistence type="predicted"/>
<feature type="chain" id="PRO_0000203182" description="Uncharacterized protein YKL044W">
    <location>
        <begin position="1"/>
        <end position="106"/>
    </location>
</feature>
<feature type="transmembrane region" description="Helical" evidence="1">
    <location>
        <begin position="85"/>
        <end position="101"/>
    </location>
</feature>